<organism>
    <name type="scientific">Yersinia enterocolitica</name>
    <dbReference type="NCBI Taxonomy" id="630"/>
    <lineage>
        <taxon>Bacteria</taxon>
        <taxon>Pseudomonadati</taxon>
        <taxon>Pseudomonadota</taxon>
        <taxon>Gammaproteobacteria</taxon>
        <taxon>Enterobacterales</taxon>
        <taxon>Yersiniaceae</taxon>
        <taxon>Yersinia</taxon>
    </lineage>
</organism>
<geneLocation type="plasmid">
    <name>pYV</name>
</geneLocation>
<feature type="chain" id="PRO_0000066480" description="Type 3 secretion system chaperone YscE">
    <location>
        <begin position="1"/>
        <end position="66"/>
    </location>
</feature>
<accession>Q01246</accession>
<gene>
    <name evidence="5" type="primary">yscE</name>
</gene>
<protein>
    <recommendedName>
        <fullName evidence="6">Type 3 secretion system chaperone YscE</fullName>
    </recommendedName>
    <alternativeName>
        <fullName evidence="6">Yersinia secretion component E</fullName>
    </alternativeName>
    <alternativeName>
        <fullName evidence="6">Yop proteins translocation protein E</fullName>
    </alternativeName>
</protein>
<keyword id="KW-0963">Cytoplasm</keyword>
<keyword id="KW-0614">Plasmid</keyword>
<keyword id="KW-0843">Virulence</keyword>
<dbReference type="EMBL" id="M74011">
    <property type="protein sequence ID" value="AAC37022.1"/>
    <property type="molecule type" value="Genomic_DNA"/>
</dbReference>
<dbReference type="PIR" id="E40361">
    <property type="entry name" value="E40361"/>
</dbReference>
<dbReference type="RefSeq" id="WP_010891227.1">
    <property type="nucleotide sequence ID" value="NZ_KN150737.1"/>
</dbReference>
<dbReference type="SMR" id="Q01246"/>
<dbReference type="KEGG" id="yet:CH48_4198"/>
<dbReference type="GO" id="GO:0005737">
    <property type="term" value="C:cytoplasm"/>
    <property type="evidence" value="ECO:0007669"/>
    <property type="project" value="UniProtKB-SubCell"/>
</dbReference>
<dbReference type="Gene3D" id="1.20.5.420">
    <property type="entry name" value="Immunoglobulin FC, subunit C"/>
    <property type="match status" value="1"/>
</dbReference>
<dbReference type="InterPro" id="IPR012671">
    <property type="entry name" value="T3SS_PscE/YscE"/>
</dbReference>
<dbReference type="NCBIfam" id="TIGR02501">
    <property type="entry name" value="type_III_yscE"/>
    <property type="match status" value="1"/>
</dbReference>
<dbReference type="Pfam" id="PF08988">
    <property type="entry name" value="T3SS_needle_E"/>
    <property type="match status" value="1"/>
</dbReference>
<name>YSCE_YEREN</name>
<reference key="1">
    <citation type="journal article" date="1991" name="J. Bacteriol.">
        <title>Analysis of virC, an operon involved in the secretion of Yop proteins by Yersinia enterocolitica.</title>
        <authorList>
            <person name="Michiels T."/>
            <person name="Vanooteghem J.-C."/>
            <person name="de Rouvroit C."/>
            <person name="China B."/>
            <person name="Gustin A."/>
            <person name="Boudry P."/>
            <person name="Cornelis G.R."/>
        </authorList>
    </citation>
    <scope>NUCLEOTIDE SEQUENCE [GENOMIC DNA]</scope>
    <scope>INDUCTION</scope>
    <scope>OPERON</scope>
    <source>
        <strain>439-80 / Serotype O:9</strain>
    </source>
</reference>
<reference key="2">
    <citation type="journal article" date="1995" name="Mol. Microbiol.">
        <title>Mutational analysis of the Yersinia enterocolitica virC operon: characterization of yscE, F, G, I, J, K required for Yop secretion and yscH encoding YopR.</title>
        <authorList>
            <person name="Allaoui A."/>
            <person name="Schulte R."/>
            <person name="Cornelis G.R."/>
        </authorList>
    </citation>
    <scope>FUNCTION IN YOP SECRETION</scope>
    <scope>DISRUPTION PHENOTYPE</scope>
    <source>
        <strain>W227 / Serotype O:9</strain>
    </source>
</reference>
<comment type="function">
    <text evidence="1 2 4">Chaperone of the type III secretion system (T3SS), also called injectisome, which is used to inject bacterial effector proteins into eukaryotic host cells (By similarity). Along with YscG, prevents premature polymerization of the YscF/SctF needle protein within the cytoplasm (By similarity). Required for Yop secretion (PubMed:8709853).</text>
</comment>
<comment type="subunit">
    <text evidence="1">Component of the heterodimeric YscE-YscG chaperone (By similarity). The YscE-YscG chaperone forms a stable ternary complex with YscF/SctF (By similarity).</text>
</comment>
<comment type="subcellular location">
    <subcellularLocation>
        <location evidence="1">Cytoplasm</location>
    </subcellularLocation>
    <text evidence="1">Could be a peripheral membrane protein.</text>
</comment>
<comment type="induction">
    <text evidence="3">At 37 degrees Celsius in the absence of calcium (PubMed:1860816). Belongs to an operon involved in the translocation of Yop proteins across the bacterial membranes or in the specific control of this function (PubMed:1860816).</text>
</comment>
<comment type="disruption phenotype">
    <text evidence="4">Mutant is unable to secrete the Yop proteins upon thermal induction in a Ca(2+)-deprived medium.</text>
</comment>
<comment type="similarity">
    <text evidence="6">Belongs to the YscE family.</text>
</comment>
<sequence>MTQLEEQLHNVETVRSITMQLEMALAKLKKDMMRGGDAKQYQVWQSESKAIESAIAIIHYVAGGLK</sequence>
<evidence type="ECO:0000250" key="1">
    <source>
        <dbReference type="UniProtKB" id="O68692"/>
    </source>
</evidence>
<evidence type="ECO:0000250" key="2">
    <source>
        <dbReference type="UniProtKB" id="Q9I317"/>
    </source>
</evidence>
<evidence type="ECO:0000269" key="3">
    <source>
    </source>
</evidence>
<evidence type="ECO:0000269" key="4">
    <source>
    </source>
</evidence>
<evidence type="ECO:0000303" key="5">
    <source>
    </source>
</evidence>
<evidence type="ECO:0000305" key="6"/>
<proteinExistence type="evidence at protein level"/>